<feature type="chain" id="PRO_0000097975" description="Probable Sec-independent protein translocase protein TatE">
    <location>
        <begin position="1"/>
        <end position="67"/>
    </location>
</feature>
<feature type="transmembrane region" description="Helical" evidence="1">
    <location>
        <begin position="4"/>
        <end position="21"/>
    </location>
</feature>
<dbReference type="EMBL" id="AE014075">
    <property type="protein sequence ID" value="AAN79190.1"/>
    <property type="molecule type" value="Genomic_DNA"/>
</dbReference>
<dbReference type="RefSeq" id="WP_000503931.1">
    <property type="nucleotide sequence ID" value="NZ_CP051263.1"/>
</dbReference>
<dbReference type="SMR" id="P0A844"/>
<dbReference type="STRING" id="199310.c0717"/>
<dbReference type="GeneID" id="93776856"/>
<dbReference type="KEGG" id="ecc:c0717"/>
<dbReference type="eggNOG" id="COG1826">
    <property type="taxonomic scope" value="Bacteria"/>
</dbReference>
<dbReference type="HOGENOM" id="CLU_086034_5_3_6"/>
<dbReference type="BioCyc" id="ECOL199310:C0717-MONOMER"/>
<dbReference type="Proteomes" id="UP000001410">
    <property type="component" value="Chromosome"/>
</dbReference>
<dbReference type="GO" id="GO:0033281">
    <property type="term" value="C:TAT protein transport complex"/>
    <property type="evidence" value="ECO:0007669"/>
    <property type="project" value="UniProtKB-UniRule"/>
</dbReference>
<dbReference type="GO" id="GO:0008320">
    <property type="term" value="F:protein transmembrane transporter activity"/>
    <property type="evidence" value="ECO:0007669"/>
    <property type="project" value="UniProtKB-UniRule"/>
</dbReference>
<dbReference type="GO" id="GO:0043953">
    <property type="term" value="P:protein transport by the Tat complex"/>
    <property type="evidence" value="ECO:0007669"/>
    <property type="project" value="UniProtKB-UniRule"/>
</dbReference>
<dbReference type="FunFam" id="1.20.5.3310:FF:000001">
    <property type="entry name" value="Probable Sec-independent protein translocase protein TatE"/>
    <property type="match status" value="1"/>
</dbReference>
<dbReference type="Gene3D" id="1.20.5.3310">
    <property type="match status" value="1"/>
</dbReference>
<dbReference type="HAMAP" id="MF_00236">
    <property type="entry name" value="TatA_E"/>
    <property type="match status" value="1"/>
</dbReference>
<dbReference type="HAMAP" id="MF_00903">
    <property type="entry name" value="TatE"/>
    <property type="match status" value="1"/>
</dbReference>
<dbReference type="InterPro" id="IPR003369">
    <property type="entry name" value="TatA/B/E"/>
</dbReference>
<dbReference type="InterPro" id="IPR006312">
    <property type="entry name" value="TatA/E"/>
</dbReference>
<dbReference type="InterPro" id="IPR024905">
    <property type="entry name" value="TatE"/>
</dbReference>
<dbReference type="NCBIfam" id="NF002448">
    <property type="entry name" value="PRK01614.1"/>
    <property type="match status" value="1"/>
</dbReference>
<dbReference type="NCBIfam" id="NF002960">
    <property type="entry name" value="PRK03625.1"/>
    <property type="match status" value="1"/>
</dbReference>
<dbReference type="NCBIfam" id="TIGR01411">
    <property type="entry name" value="tatAE"/>
    <property type="match status" value="1"/>
</dbReference>
<dbReference type="PANTHER" id="PTHR42982">
    <property type="entry name" value="SEC-INDEPENDENT PROTEIN TRANSLOCASE PROTEIN TATA"/>
    <property type="match status" value="1"/>
</dbReference>
<dbReference type="PANTHER" id="PTHR42982:SF5">
    <property type="entry name" value="SEC-INDEPENDENT PROTEIN TRANSLOCASE PROTEIN TATE"/>
    <property type="match status" value="1"/>
</dbReference>
<dbReference type="Pfam" id="PF02416">
    <property type="entry name" value="TatA_B_E"/>
    <property type="match status" value="1"/>
</dbReference>
<comment type="function">
    <text evidence="1">Part of the twin-arginine translocation (Tat) system that transports large folded proteins containing a characteristic twin-arginine motif in their signal peptide across membranes. TatE shares overlapping functions with TatA.</text>
</comment>
<comment type="subcellular location">
    <subcellularLocation>
        <location evidence="1">Cell inner membrane</location>
        <topology evidence="1">Single-pass membrane protein</topology>
    </subcellularLocation>
</comment>
<comment type="similarity">
    <text evidence="1">Belongs to the TatA/E family. TatE subfamily.</text>
</comment>
<evidence type="ECO:0000255" key="1">
    <source>
        <dbReference type="HAMAP-Rule" id="MF_00903"/>
    </source>
</evidence>
<sequence>MGEISITKLLVVAALVVLLFGTKKLRTLGGDLGAAIKGFKKAMNDDDAAAKKGADVDLQAEKLSHKE</sequence>
<accession>P0A844</accession>
<accession>P25895</accession>
<accession>P77420</accession>
<gene>
    <name evidence="1" type="primary">tatE</name>
    <name type="ordered locus">c0717</name>
</gene>
<keyword id="KW-0997">Cell inner membrane</keyword>
<keyword id="KW-1003">Cell membrane</keyword>
<keyword id="KW-0472">Membrane</keyword>
<keyword id="KW-0653">Protein transport</keyword>
<keyword id="KW-1185">Reference proteome</keyword>
<keyword id="KW-0811">Translocation</keyword>
<keyword id="KW-0812">Transmembrane</keyword>
<keyword id="KW-1133">Transmembrane helix</keyword>
<keyword id="KW-0813">Transport</keyword>
<proteinExistence type="inferred from homology"/>
<reference key="1">
    <citation type="journal article" date="2002" name="Proc. Natl. Acad. Sci. U.S.A.">
        <title>Extensive mosaic structure revealed by the complete genome sequence of uropathogenic Escherichia coli.</title>
        <authorList>
            <person name="Welch R.A."/>
            <person name="Burland V."/>
            <person name="Plunkett G. III"/>
            <person name="Redford P."/>
            <person name="Roesch P."/>
            <person name="Rasko D."/>
            <person name="Buckles E.L."/>
            <person name="Liou S.-R."/>
            <person name="Boutin A."/>
            <person name="Hackett J."/>
            <person name="Stroud D."/>
            <person name="Mayhew G.F."/>
            <person name="Rose D.J."/>
            <person name="Zhou S."/>
            <person name="Schwartz D.C."/>
            <person name="Perna N.T."/>
            <person name="Mobley H.L.T."/>
            <person name="Donnenberg M.S."/>
            <person name="Blattner F.R."/>
        </authorList>
    </citation>
    <scope>NUCLEOTIDE SEQUENCE [LARGE SCALE GENOMIC DNA]</scope>
    <source>
        <strain>CFT073 / ATCC 700928 / UPEC</strain>
    </source>
</reference>
<protein>
    <recommendedName>
        <fullName evidence="1">Probable Sec-independent protein translocase protein TatE</fullName>
    </recommendedName>
</protein>
<name>TATE_ECOL6</name>
<organism>
    <name type="scientific">Escherichia coli O6:H1 (strain CFT073 / ATCC 700928 / UPEC)</name>
    <dbReference type="NCBI Taxonomy" id="199310"/>
    <lineage>
        <taxon>Bacteria</taxon>
        <taxon>Pseudomonadati</taxon>
        <taxon>Pseudomonadota</taxon>
        <taxon>Gammaproteobacteria</taxon>
        <taxon>Enterobacterales</taxon>
        <taxon>Enterobacteriaceae</taxon>
        <taxon>Escherichia</taxon>
    </lineage>
</organism>